<dbReference type="EMBL" id="AY178864">
    <property type="protein sequence ID" value="AAP29439.1"/>
    <property type="molecule type" value="Genomic_DNA"/>
</dbReference>
<dbReference type="RefSeq" id="NP_848108.1">
    <property type="nucleotide sequence ID" value="NC_004766.1"/>
</dbReference>
<dbReference type="SMR" id="Q85FH7"/>
<dbReference type="GeneID" id="807390"/>
<dbReference type="GO" id="GO:0009507">
    <property type="term" value="C:chloroplast"/>
    <property type="evidence" value="ECO:0007669"/>
    <property type="project" value="UniProtKB-SubCell"/>
</dbReference>
<dbReference type="GO" id="GO:0015934">
    <property type="term" value="C:large ribosomal subunit"/>
    <property type="evidence" value="ECO:0007669"/>
    <property type="project" value="InterPro"/>
</dbReference>
<dbReference type="GO" id="GO:0003735">
    <property type="term" value="F:structural constituent of ribosome"/>
    <property type="evidence" value="ECO:0007669"/>
    <property type="project" value="InterPro"/>
</dbReference>
<dbReference type="GO" id="GO:0006412">
    <property type="term" value="P:translation"/>
    <property type="evidence" value="ECO:0007669"/>
    <property type="project" value="UniProtKB-UniRule"/>
</dbReference>
<dbReference type="HAMAP" id="MF_00340">
    <property type="entry name" value="Ribosomal_bL32"/>
    <property type="match status" value="1"/>
</dbReference>
<dbReference type="InterPro" id="IPR002677">
    <property type="entry name" value="Ribosomal_bL32"/>
</dbReference>
<dbReference type="InterPro" id="IPR044958">
    <property type="entry name" value="Ribosomal_bL32_plant/cyanobact"/>
</dbReference>
<dbReference type="PANTHER" id="PTHR36083">
    <property type="entry name" value="50S RIBOSOMAL PROTEIN L32, CHLOROPLASTIC"/>
    <property type="match status" value="1"/>
</dbReference>
<dbReference type="PANTHER" id="PTHR36083:SF1">
    <property type="entry name" value="LARGE RIBOSOMAL SUBUNIT PROTEIN BL32C"/>
    <property type="match status" value="1"/>
</dbReference>
<dbReference type="Pfam" id="PF01783">
    <property type="entry name" value="Ribosomal_L32p"/>
    <property type="match status" value="1"/>
</dbReference>
<proteinExistence type="evidence at transcript level"/>
<protein>
    <recommendedName>
        <fullName evidence="1">Large ribosomal subunit protein bL32c</fullName>
    </recommendedName>
    <alternativeName>
        <fullName>50S ribosomal protein L32, chloroplastic</fullName>
    </alternativeName>
</protein>
<keyword id="KW-0150">Chloroplast</keyword>
<keyword id="KW-0934">Plastid</keyword>
<keyword id="KW-0687">Ribonucleoprotein</keyword>
<keyword id="KW-0689">Ribosomal protein</keyword>
<geneLocation type="chloroplast"/>
<feature type="chain" id="PRO_0000172445" description="Large ribosomal subunit protein bL32c">
    <location>
        <begin position="1"/>
        <end position="58"/>
    </location>
</feature>
<accession>Q85FH7</accession>
<name>RK32_ADICA</name>
<evidence type="ECO:0000305" key="1"/>
<sequence length="58" mass="6666">MAVPKKRTSASMKKIRNHSWKIKSVEKSLKSFSLAQSVLSGRSKSFYYGTEKKPFQKN</sequence>
<reference key="1">
    <citation type="journal article" date="2003" name="DNA Res.">
        <title>Complete nucleotide sequence of the chloroplast genome from a leptosporangiate fern, Adiantum capillus-veneris L.</title>
        <authorList>
            <person name="Wolf P.G."/>
            <person name="Rowe C.A."/>
            <person name="Sinclair R.B."/>
            <person name="Hasebe M."/>
        </authorList>
    </citation>
    <scope>NUCLEOTIDE SEQUENCE [LARGE SCALE GENOMIC DNA]</scope>
</reference>
<reference key="2">
    <citation type="journal article" date="2004" name="Gene">
        <title>High levels of RNA editing in a vascular plant chloroplast genome: analysis of transcripts from the fern Adiantum capillus-veneris.</title>
        <authorList>
            <person name="Wolf P.G."/>
            <person name="Rowe C.A."/>
            <person name="Hasebe M."/>
        </authorList>
    </citation>
    <scope>NUCLEOTIDE SEQUENCE [GENOMIC DNA]</scope>
    <scope>ABSENCE OF RNA EDITING</scope>
    <source>
        <tissue>Frond</tissue>
    </source>
</reference>
<comment type="subcellular location">
    <subcellularLocation>
        <location>Plastid</location>
        <location>Chloroplast</location>
    </subcellularLocation>
</comment>
<comment type="similarity">
    <text evidence="1">Belongs to the bacterial ribosomal protein bL32 family.</text>
</comment>
<organism>
    <name type="scientific">Adiantum capillus-veneris</name>
    <name type="common">Maidenhair fern</name>
    <dbReference type="NCBI Taxonomy" id="13818"/>
    <lineage>
        <taxon>Eukaryota</taxon>
        <taxon>Viridiplantae</taxon>
        <taxon>Streptophyta</taxon>
        <taxon>Embryophyta</taxon>
        <taxon>Tracheophyta</taxon>
        <taxon>Polypodiopsida</taxon>
        <taxon>Polypodiidae</taxon>
        <taxon>Polypodiales</taxon>
        <taxon>Pteridineae</taxon>
        <taxon>Pteridaceae</taxon>
        <taxon>Vittarioideae</taxon>
        <taxon>Adiantum</taxon>
    </lineage>
</organism>
<gene>
    <name type="primary">rpl32</name>
</gene>